<accession>A1SJI0</accession>
<evidence type="ECO:0000255" key="1">
    <source>
        <dbReference type="HAMAP-Rule" id="MF_00382"/>
    </source>
</evidence>
<evidence type="ECO:0000305" key="2"/>
<proteinExistence type="inferred from homology"/>
<name>RL20_NOCSJ</name>
<gene>
    <name evidence="1" type="primary">rplT</name>
    <name type="ordered locus">Noca_2461</name>
</gene>
<keyword id="KW-1185">Reference proteome</keyword>
<keyword id="KW-0687">Ribonucleoprotein</keyword>
<keyword id="KW-0689">Ribosomal protein</keyword>
<keyword id="KW-0694">RNA-binding</keyword>
<keyword id="KW-0699">rRNA-binding</keyword>
<sequence length="130" mass="14615">MARVKRAVNAQKKRRVVLERASGYRGQRSRLYRKAKEQVTHSLVYSYNDRRKNKGNFRKLWIQRINAAARAQGMTYNRFIQGLNLAGVEVDRKILADLAVNDVTAFNALVETAKAALPADVNAPKAEASA</sequence>
<organism>
    <name type="scientific">Nocardioides sp. (strain ATCC BAA-499 / JS614)</name>
    <dbReference type="NCBI Taxonomy" id="196162"/>
    <lineage>
        <taxon>Bacteria</taxon>
        <taxon>Bacillati</taxon>
        <taxon>Actinomycetota</taxon>
        <taxon>Actinomycetes</taxon>
        <taxon>Propionibacteriales</taxon>
        <taxon>Nocardioidaceae</taxon>
        <taxon>Nocardioides</taxon>
    </lineage>
</organism>
<reference key="1">
    <citation type="submission" date="2006-12" db="EMBL/GenBank/DDBJ databases">
        <title>Complete sequence of chromosome 1 of Nocardioides sp. JS614.</title>
        <authorList>
            <person name="Copeland A."/>
            <person name="Lucas S."/>
            <person name="Lapidus A."/>
            <person name="Barry K."/>
            <person name="Detter J.C."/>
            <person name="Glavina del Rio T."/>
            <person name="Hammon N."/>
            <person name="Israni S."/>
            <person name="Dalin E."/>
            <person name="Tice H."/>
            <person name="Pitluck S."/>
            <person name="Thompson L.S."/>
            <person name="Brettin T."/>
            <person name="Bruce D."/>
            <person name="Han C."/>
            <person name="Tapia R."/>
            <person name="Schmutz J."/>
            <person name="Larimer F."/>
            <person name="Land M."/>
            <person name="Hauser L."/>
            <person name="Kyrpides N."/>
            <person name="Kim E."/>
            <person name="Mattes T."/>
            <person name="Gossett J."/>
            <person name="Richardson P."/>
        </authorList>
    </citation>
    <scope>NUCLEOTIDE SEQUENCE [LARGE SCALE GENOMIC DNA]</scope>
    <source>
        <strain>ATCC BAA-499 / JS614</strain>
    </source>
</reference>
<protein>
    <recommendedName>
        <fullName evidence="1">Large ribosomal subunit protein bL20</fullName>
    </recommendedName>
    <alternativeName>
        <fullName evidence="2">50S ribosomal protein L20</fullName>
    </alternativeName>
</protein>
<comment type="function">
    <text evidence="1">Binds directly to 23S ribosomal RNA and is necessary for the in vitro assembly process of the 50S ribosomal subunit. It is not involved in the protein synthesizing functions of that subunit.</text>
</comment>
<comment type="similarity">
    <text evidence="1">Belongs to the bacterial ribosomal protein bL20 family.</text>
</comment>
<dbReference type="EMBL" id="CP000509">
    <property type="protein sequence ID" value="ABL81965.1"/>
    <property type="molecule type" value="Genomic_DNA"/>
</dbReference>
<dbReference type="RefSeq" id="WP_011755906.1">
    <property type="nucleotide sequence ID" value="NC_008699.1"/>
</dbReference>
<dbReference type="SMR" id="A1SJI0"/>
<dbReference type="STRING" id="196162.Noca_2461"/>
<dbReference type="KEGG" id="nca:Noca_2461"/>
<dbReference type="eggNOG" id="COG0292">
    <property type="taxonomic scope" value="Bacteria"/>
</dbReference>
<dbReference type="HOGENOM" id="CLU_123265_0_0_11"/>
<dbReference type="OrthoDB" id="9808966at2"/>
<dbReference type="Proteomes" id="UP000000640">
    <property type="component" value="Chromosome"/>
</dbReference>
<dbReference type="GO" id="GO:1990904">
    <property type="term" value="C:ribonucleoprotein complex"/>
    <property type="evidence" value="ECO:0007669"/>
    <property type="project" value="UniProtKB-KW"/>
</dbReference>
<dbReference type="GO" id="GO:0005840">
    <property type="term" value="C:ribosome"/>
    <property type="evidence" value="ECO:0007669"/>
    <property type="project" value="UniProtKB-KW"/>
</dbReference>
<dbReference type="GO" id="GO:0019843">
    <property type="term" value="F:rRNA binding"/>
    <property type="evidence" value="ECO:0007669"/>
    <property type="project" value="UniProtKB-UniRule"/>
</dbReference>
<dbReference type="GO" id="GO:0003735">
    <property type="term" value="F:structural constituent of ribosome"/>
    <property type="evidence" value="ECO:0007669"/>
    <property type="project" value="InterPro"/>
</dbReference>
<dbReference type="GO" id="GO:0000027">
    <property type="term" value="P:ribosomal large subunit assembly"/>
    <property type="evidence" value="ECO:0007669"/>
    <property type="project" value="UniProtKB-UniRule"/>
</dbReference>
<dbReference type="GO" id="GO:0006412">
    <property type="term" value="P:translation"/>
    <property type="evidence" value="ECO:0007669"/>
    <property type="project" value="InterPro"/>
</dbReference>
<dbReference type="CDD" id="cd07026">
    <property type="entry name" value="Ribosomal_L20"/>
    <property type="match status" value="1"/>
</dbReference>
<dbReference type="FunFam" id="1.10.1900.20:FF:000001">
    <property type="entry name" value="50S ribosomal protein L20"/>
    <property type="match status" value="1"/>
</dbReference>
<dbReference type="Gene3D" id="6.10.160.10">
    <property type="match status" value="1"/>
</dbReference>
<dbReference type="Gene3D" id="1.10.1900.20">
    <property type="entry name" value="Ribosomal protein L20"/>
    <property type="match status" value="1"/>
</dbReference>
<dbReference type="HAMAP" id="MF_00382">
    <property type="entry name" value="Ribosomal_bL20"/>
    <property type="match status" value="1"/>
</dbReference>
<dbReference type="InterPro" id="IPR005813">
    <property type="entry name" value="Ribosomal_bL20"/>
</dbReference>
<dbReference type="InterPro" id="IPR049946">
    <property type="entry name" value="RIBOSOMAL_L20_CS"/>
</dbReference>
<dbReference type="InterPro" id="IPR035566">
    <property type="entry name" value="Ribosomal_protein_bL20_C"/>
</dbReference>
<dbReference type="NCBIfam" id="TIGR01032">
    <property type="entry name" value="rplT_bact"/>
    <property type="match status" value="1"/>
</dbReference>
<dbReference type="PANTHER" id="PTHR10986">
    <property type="entry name" value="39S RIBOSOMAL PROTEIN L20"/>
    <property type="match status" value="1"/>
</dbReference>
<dbReference type="Pfam" id="PF00453">
    <property type="entry name" value="Ribosomal_L20"/>
    <property type="match status" value="1"/>
</dbReference>
<dbReference type="PRINTS" id="PR00062">
    <property type="entry name" value="RIBOSOMALL20"/>
</dbReference>
<dbReference type="SUPFAM" id="SSF74731">
    <property type="entry name" value="Ribosomal protein L20"/>
    <property type="match status" value="1"/>
</dbReference>
<dbReference type="PROSITE" id="PS00937">
    <property type="entry name" value="RIBOSOMAL_L20"/>
    <property type="match status" value="1"/>
</dbReference>
<feature type="chain" id="PRO_1000049023" description="Large ribosomal subunit protein bL20">
    <location>
        <begin position="1"/>
        <end position="130"/>
    </location>
</feature>